<name>AN34B_XENLA</name>
<reference key="1">
    <citation type="submission" date="2004-12" db="EMBL/GenBank/DDBJ databases">
        <authorList>
            <consortium name="NIH - Xenopus Gene Collection (XGC) project"/>
        </authorList>
    </citation>
    <scope>NUCLEOTIDE SEQUENCE [LARGE SCALE MRNA]</scope>
    <source>
        <tissue>Testis</tissue>
    </source>
</reference>
<evidence type="ECO:0000250" key="1"/>
<evidence type="ECO:0000256" key="2">
    <source>
        <dbReference type="SAM" id="MobiDB-lite"/>
    </source>
</evidence>
<evidence type="ECO:0000305" key="3"/>
<protein>
    <recommendedName>
        <fullName>Ankyrin repeat domain-containing protein 34B</fullName>
    </recommendedName>
</protein>
<accession>Q5PQ89</accession>
<feature type="chain" id="PRO_0000366028" description="Ankyrin repeat domain-containing protein 34B">
    <location>
        <begin position="1"/>
        <end position="521"/>
    </location>
</feature>
<feature type="repeat" description="ANK 1">
    <location>
        <begin position="9"/>
        <end position="38"/>
    </location>
</feature>
<feature type="repeat" description="ANK 2">
    <location>
        <begin position="42"/>
        <end position="79"/>
    </location>
</feature>
<feature type="repeat" description="ANK 3">
    <location>
        <begin position="83"/>
        <end position="113"/>
    </location>
</feature>
<feature type="repeat" description="ANK 4">
    <location>
        <begin position="117"/>
        <end position="146"/>
    </location>
</feature>
<feature type="region of interest" description="Disordered" evidence="2">
    <location>
        <begin position="161"/>
        <end position="188"/>
    </location>
</feature>
<feature type="compositionally biased region" description="Polar residues" evidence="2">
    <location>
        <begin position="177"/>
        <end position="188"/>
    </location>
</feature>
<dbReference type="EMBL" id="BC087315">
    <property type="protein sequence ID" value="AAH87315.1"/>
    <property type="molecule type" value="mRNA"/>
</dbReference>
<dbReference type="RefSeq" id="NP_001088682.1">
    <property type="nucleotide sequence ID" value="NM_001095213.1"/>
</dbReference>
<dbReference type="SMR" id="Q5PQ89"/>
<dbReference type="DNASU" id="495946"/>
<dbReference type="GeneID" id="495946"/>
<dbReference type="KEGG" id="xla:495946"/>
<dbReference type="AGR" id="Xenbase:XB-GENE-985824"/>
<dbReference type="CTD" id="495946"/>
<dbReference type="Xenbase" id="XB-GENE-985824">
    <property type="gene designation" value="ankrd34b.L"/>
</dbReference>
<dbReference type="OMA" id="AFPLDHN"/>
<dbReference type="OrthoDB" id="539213at2759"/>
<dbReference type="Proteomes" id="UP000186698">
    <property type="component" value="Chromosome 1L"/>
</dbReference>
<dbReference type="Bgee" id="495946">
    <property type="expression patterns" value="Expressed in testis and 2 other cell types or tissues"/>
</dbReference>
<dbReference type="GO" id="GO:0005737">
    <property type="term" value="C:cytoplasm"/>
    <property type="evidence" value="ECO:0007669"/>
    <property type="project" value="UniProtKB-SubCell"/>
</dbReference>
<dbReference type="GO" id="GO:0005634">
    <property type="term" value="C:nucleus"/>
    <property type="evidence" value="ECO:0007669"/>
    <property type="project" value="UniProtKB-SubCell"/>
</dbReference>
<dbReference type="Gene3D" id="1.25.40.20">
    <property type="entry name" value="Ankyrin repeat-containing domain"/>
    <property type="match status" value="1"/>
</dbReference>
<dbReference type="InterPro" id="IPR042637">
    <property type="entry name" value="AN34A/B/C"/>
</dbReference>
<dbReference type="InterPro" id="IPR002110">
    <property type="entry name" value="Ankyrin_rpt"/>
</dbReference>
<dbReference type="InterPro" id="IPR036770">
    <property type="entry name" value="Ankyrin_rpt-contain_sf"/>
</dbReference>
<dbReference type="PANTHER" id="PTHR24156">
    <property type="entry name" value="ANK_REP_REGION DOMAIN-CONTAINING PROTEIN"/>
    <property type="match status" value="1"/>
</dbReference>
<dbReference type="PANTHER" id="PTHR24156:SF1">
    <property type="entry name" value="ANKYRIN REPEAT DOMAIN-CONTAINING PROTEIN 34B"/>
    <property type="match status" value="1"/>
</dbReference>
<dbReference type="Pfam" id="PF12796">
    <property type="entry name" value="Ank_2"/>
    <property type="match status" value="1"/>
</dbReference>
<dbReference type="Pfam" id="PF13637">
    <property type="entry name" value="Ank_4"/>
    <property type="match status" value="1"/>
</dbReference>
<dbReference type="SMART" id="SM00248">
    <property type="entry name" value="ANK"/>
    <property type="match status" value="4"/>
</dbReference>
<dbReference type="SUPFAM" id="SSF48403">
    <property type="entry name" value="Ankyrin repeat"/>
    <property type="match status" value="1"/>
</dbReference>
<dbReference type="PROSITE" id="PS50297">
    <property type="entry name" value="ANK_REP_REGION"/>
    <property type="match status" value="1"/>
</dbReference>
<dbReference type="PROSITE" id="PS50088">
    <property type="entry name" value="ANK_REPEAT"/>
    <property type="match status" value="2"/>
</dbReference>
<gene>
    <name type="primary">ankrd34b</name>
</gene>
<proteinExistence type="evidence at transcript level"/>
<organism>
    <name type="scientific">Xenopus laevis</name>
    <name type="common">African clawed frog</name>
    <dbReference type="NCBI Taxonomy" id="8355"/>
    <lineage>
        <taxon>Eukaryota</taxon>
        <taxon>Metazoa</taxon>
        <taxon>Chordata</taxon>
        <taxon>Craniata</taxon>
        <taxon>Vertebrata</taxon>
        <taxon>Euteleostomi</taxon>
        <taxon>Amphibia</taxon>
        <taxon>Batrachia</taxon>
        <taxon>Anura</taxon>
        <taxon>Pipoidea</taxon>
        <taxon>Pipidae</taxon>
        <taxon>Xenopodinae</taxon>
        <taxon>Xenopus</taxon>
        <taxon>Xenopus</taxon>
    </lineage>
</organism>
<comment type="subcellular location">
    <subcellularLocation>
        <location evidence="1">Cytoplasm</location>
    </subcellularLocation>
    <subcellularLocation>
        <location evidence="1">Nucleus</location>
    </subcellularLocation>
</comment>
<comment type="similarity">
    <text evidence="3">Belongs to the ANKRD34 family.</text>
</comment>
<sequence length="521" mass="57403">MDEAVDVTTESNSLIKAVYQSRLRLTRLLLEGGAYINESNDRGETPLMIACKTKHVDHQSVSKVKMIKYLLENNADPNIQDKFGKTALMHACLENAGAEVVSLLLESGADPSLQDHTGFSALVYAVNSEDKETLRILLNACKAKGKEVIIITKDKSASGKQTTRQYLNVPPSPGIEGNNSPSPCTSPSDIELKTSPAPISNALETEKELFNFKEAASSCGFKGSSQPGSPTKKPHLSHVGGKLPLLQRLHSEPWLKIPPSLLHQHKVSSLQEELQDITPDEELSLQMNELMFSKRYFTRHQSIDVKDASHLLKTFDTAGARKLSYDEIHSHSIYPEANPNRPETLPVDQEPDLMHSISVSSLKSIVQRRNLGANHYSSDSQLTTRAGPAAAEDSKSLLEKKKMLCPQPLLTGSRESLESISVTALSRRNHAILERRGSGALLLDHIAHTRPGFLPPLNVNPHPPIPDISIHSKLISSGTKSLIPSAPHVPKEPKSKKMLLRRHSMHTEQIKQLMNLEEIFG</sequence>
<keyword id="KW-0040">ANK repeat</keyword>
<keyword id="KW-0963">Cytoplasm</keyword>
<keyword id="KW-0539">Nucleus</keyword>
<keyword id="KW-1185">Reference proteome</keyword>
<keyword id="KW-0677">Repeat</keyword>